<gene>
    <name evidence="1" type="primary">nadE</name>
    <name type="ordered locus">LGAS_1527</name>
</gene>
<keyword id="KW-0067">ATP-binding</keyword>
<keyword id="KW-0436">Ligase</keyword>
<keyword id="KW-0460">Magnesium</keyword>
<keyword id="KW-0479">Metal-binding</keyword>
<keyword id="KW-0520">NAD</keyword>
<keyword id="KW-0547">Nucleotide-binding</keyword>
<comment type="function">
    <text evidence="1">Catalyzes the ATP-dependent amidation of deamido-NAD to form NAD. Uses ammonia as a nitrogen source.</text>
</comment>
<comment type="catalytic activity">
    <reaction evidence="1">
        <text>deamido-NAD(+) + NH4(+) + ATP = AMP + diphosphate + NAD(+) + H(+)</text>
        <dbReference type="Rhea" id="RHEA:21188"/>
        <dbReference type="ChEBI" id="CHEBI:15378"/>
        <dbReference type="ChEBI" id="CHEBI:28938"/>
        <dbReference type="ChEBI" id="CHEBI:30616"/>
        <dbReference type="ChEBI" id="CHEBI:33019"/>
        <dbReference type="ChEBI" id="CHEBI:57540"/>
        <dbReference type="ChEBI" id="CHEBI:58437"/>
        <dbReference type="ChEBI" id="CHEBI:456215"/>
        <dbReference type="EC" id="6.3.1.5"/>
    </reaction>
</comment>
<comment type="pathway">
    <text evidence="1">Cofactor biosynthesis; NAD(+) biosynthesis; NAD(+) from deamido-NAD(+) (ammonia route): step 1/1.</text>
</comment>
<comment type="subunit">
    <text evidence="1">Homodimer.</text>
</comment>
<comment type="similarity">
    <text evidence="1">Belongs to the NAD synthetase family.</text>
</comment>
<proteinExistence type="inferred from homology"/>
<accession>Q041J1</accession>
<dbReference type="EC" id="6.3.1.5" evidence="1"/>
<dbReference type="EMBL" id="CP000413">
    <property type="protein sequence ID" value="ABJ60881.1"/>
    <property type="molecule type" value="Genomic_DNA"/>
</dbReference>
<dbReference type="RefSeq" id="WP_003652856.1">
    <property type="nucleotide sequence ID" value="NZ_WBMG01000003.1"/>
</dbReference>
<dbReference type="SMR" id="Q041J1"/>
<dbReference type="GeneID" id="29638889"/>
<dbReference type="KEGG" id="lga:LGAS_1527"/>
<dbReference type="HOGENOM" id="CLU_059327_3_0_9"/>
<dbReference type="BioCyc" id="LGAS324831:G1G6Y-1524-MONOMER"/>
<dbReference type="UniPathway" id="UPA00253">
    <property type="reaction ID" value="UER00333"/>
</dbReference>
<dbReference type="Proteomes" id="UP000000664">
    <property type="component" value="Chromosome"/>
</dbReference>
<dbReference type="GO" id="GO:0005737">
    <property type="term" value="C:cytoplasm"/>
    <property type="evidence" value="ECO:0007669"/>
    <property type="project" value="InterPro"/>
</dbReference>
<dbReference type="GO" id="GO:0005524">
    <property type="term" value="F:ATP binding"/>
    <property type="evidence" value="ECO:0007669"/>
    <property type="project" value="UniProtKB-UniRule"/>
</dbReference>
<dbReference type="GO" id="GO:0004359">
    <property type="term" value="F:glutaminase activity"/>
    <property type="evidence" value="ECO:0007669"/>
    <property type="project" value="InterPro"/>
</dbReference>
<dbReference type="GO" id="GO:0046872">
    <property type="term" value="F:metal ion binding"/>
    <property type="evidence" value="ECO:0007669"/>
    <property type="project" value="UniProtKB-KW"/>
</dbReference>
<dbReference type="GO" id="GO:0003952">
    <property type="term" value="F:NAD+ synthase (glutamine-hydrolyzing) activity"/>
    <property type="evidence" value="ECO:0007669"/>
    <property type="project" value="InterPro"/>
</dbReference>
<dbReference type="GO" id="GO:0008795">
    <property type="term" value="F:NAD+ synthase activity"/>
    <property type="evidence" value="ECO:0007669"/>
    <property type="project" value="UniProtKB-UniRule"/>
</dbReference>
<dbReference type="GO" id="GO:0009435">
    <property type="term" value="P:NAD biosynthetic process"/>
    <property type="evidence" value="ECO:0007669"/>
    <property type="project" value="UniProtKB-UniRule"/>
</dbReference>
<dbReference type="CDD" id="cd00553">
    <property type="entry name" value="NAD_synthase"/>
    <property type="match status" value="1"/>
</dbReference>
<dbReference type="FunFam" id="3.40.50.620:FF:000015">
    <property type="entry name" value="NH(3)-dependent NAD(+) synthetase"/>
    <property type="match status" value="1"/>
</dbReference>
<dbReference type="Gene3D" id="3.40.50.620">
    <property type="entry name" value="HUPs"/>
    <property type="match status" value="1"/>
</dbReference>
<dbReference type="HAMAP" id="MF_00193">
    <property type="entry name" value="NadE_ammonia_dep"/>
    <property type="match status" value="1"/>
</dbReference>
<dbReference type="InterPro" id="IPR022310">
    <property type="entry name" value="NAD/GMP_synthase"/>
</dbReference>
<dbReference type="InterPro" id="IPR003694">
    <property type="entry name" value="NAD_synthase"/>
</dbReference>
<dbReference type="InterPro" id="IPR022926">
    <property type="entry name" value="NH(3)-dep_NAD(+)_synth"/>
</dbReference>
<dbReference type="InterPro" id="IPR014729">
    <property type="entry name" value="Rossmann-like_a/b/a_fold"/>
</dbReference>
<dbReference type="NCBIfam" id="TIGR00552">
    <property type="entry name" value="nadE"/>
    <property type="match status" value="1"/>
</dbReference>
<dbReference type="NCBIfam" id="NF001979">
    <property type="entry name" value="PRK00768.1"/>
    <property type="match status" value="1"/>
</dbReference>
<dbReference type="PANTHER" id="PTHR23090">
    <property type="entry name" value="NH 3 /GLUTAMINE-DEPENDENT NAD + SYNTHETASE"/>
    <property type="match status" value="1"/>
</dbReference>
<dbReference type="PANTHER" id="PTHR23090:SF7">
    <property type="entry name" value="NH(3)-DEPENDENT NAD(+) SYNTHETASE"/>
    <property type="match status" value="1"/>
</dbReference>
<dbReference type="Pfam" id="PF02540">
    <property type="entry name" value="NAD_synthase"/>
    <property type="match status" value="1"/>
</dbReference>
<dbReference type="SUPFAM" id="SSF52402">
    <property type="entry name" value="Adenine nucleotide alpha hydrolases-like"/>
    <property type="match status" value="1"/>
</dbReference>
<evidence type="ECO:0000255" key="1">
    <source>
        <dbReference type="HAMAP-Rule" id="MF_00193"/>
    </source>
</evidence>
<reference key="1">
    <citation type="journal article" date="2006" name="Proc. Natl. Acad. Sci. U.S.A.">
        <title>Comparative genomics of the lactic acid bacteria.</title>
        <authorList>
            <person name="Makarova K.S."/>
            <person name="Slesarev A."/>
            <person name="Wolf Y.I."/>
            <person name="Sorokin A."/>
            <person name="Mirkin B."/>
            <person name="Koonin E.V."/>
            <person name="Pavlov A."/>
            <person name="Pavlova N."/>
            <person name="Karamychev V."/>
            <person name="Polouchine N."/>
            <person name="Shakhova V."/>
            <person name="Grigoriev I."/>
            <person name="Lou Y."/>
            <person name="Rohksar D."/>
            <person name="Lucas S."/>
            <person name="Huang K."/>
            <person name="Goodstein D.M."/>
            <person name="Hawkins T."/>
            <person name="Plengvidhya V."/>
            <person name="Welker D."/>
            <person name="Hughes J."/>
            <person name="Goh Y."/>
            <person name="Benson A."/>
            <person name="Baldwin K."/>
            <person name="Lee J.-H."/>
            <person name="Diaz-Muniz I."/>
            <person name="Dosti B."/>
            <person name="Smeianov V."/>
            <person name="Wechter W."/>
            <person name="Barabote R."/>
            <person name="Lorca G."/>
            <person name="Altermann E."/>
            <person name="Barrangou R."/>
            <person name="Ganesan B."/>
            <person name="Xie Y."/>
            <person name="Rawsthorne H."/>
            <person name="Tamir D."/>
            <person name="Parker C."/>
            <person name="Breidt F."/>
            <person name="Broadbent J.R."/>
            <person name="Hutkins R."/>
            <person name="O'Sullivan D."/>
            <person name="Steele J."/>
            <person name="Unlu G."/>
            <person name="Saier M.H. Jr."/>
            <person name="Klaenhammer T."/>
            <person name="Richardson P."/>
            <person name="Kozyavkin S."/>
            <person name="Weimer B.C."/>
            <person name="Mills D.A."/>
        </authorList>
    </citation>
    <scope>NUCLEOTIDE SEQUENCE [LARGE SCALE GENOMIC DNA]</scope>
    <source>
        <strain>ATCC 33323 / DSM 20243 / BCRC 14619 / CIP 102991 / JCM 1131 / KCTC 3163 / NCIMB 11718 / NCTC 13722 / AM63</strain>
    </source>
</reference>
<feature type="chain" id="PRO_1000077564" description="NH(3)-dependent NAD(+) synthetase">
    <location>
        <begin position="1"/>
        <end position="277"/>
    </location>
</feature>
<feature type="binding site" evidence="1">
    <location>
        <begin position="47"/>
        <end position="54"/>
    </location>
    <ligand>
        <name>ATP</name>
        <dbReference type="ChEBI" id="CHEBI:30616"/>
    </ligand>
</feature>
<feature type="binding site" evidence="1">
    <location>
        <position position="53"/>
    </location>
    <ligand>
        <name>Mg(2+)</name>
        <dbReference type="ChEBI" id="CHEBI:18420"/>
    </ligand>
</feature>
<feature type="binding site" evidence="1">
    <location>
        <position position="141"/>
    </location>
    <ligand>
        <name>deamido-NAD(+)</name>
        <dbReference type="ChEBI" id="CHEBI:58437"/>
    </ligand>
</feature>
<feature type="binding site" evidence="1">
    <location>
        <position position="161"/>
    </location>
    <ligand>
        <name>ATP</name>
        <dbReference type="ChEBI" id="CHEBI:30616"/>
    </ligand>
</feature>
<feature type="binding site" evidence="1">
    <location>
        <position position="166"/>
    </location>
    <ligand>
        <name>Mg(2+)</name>
        <dbReference type="ChEBI" id="CHEBI:18420"/>
    </ligand>
</feature>
<feature type="binding site" evidence="1">
    <location>
        <position position="174"/>
    </location>
    <ligand>
        <name>deamido-NAD(+)</name>
        <dbReference type="ChEBI" id="CHEBI:58437"/>
    </ligand>
</feature>
<feature type="binding site" evidence="1">
    <location>
        <position position="181"/>
    </location>
    <ligand>
        <name>deamido-NAD(+)</name>
        <dbReference type="ChEBI" id="CHEBI:58437"/>
    </ligand>
</feature>
<feature type="binding site" evidence="1">
    <location>
        <position position="190"/>
    </location>
    <ligand>
        <name>ATP</name>
        <dbReference type="ChEBI" id="CHEBI:30616"/>
    </ligand>
</feature>
<feature type="binding site" evidence="1">
    <location>
        <position position="212"/>
    </location>
    <ligand>
        <name>ATP</name>
        <dbReference type="ChEBI" id="CHEBI:30616"/>
    </ligand>
</feature>
<feature type="binding site" evidence="1">
    <location>
        <begin position="261"/>
        <end position="262"/>
    </location>
    <ligand>
        <name>deamido-NAD(+)</name>
        <dbReference type="ChEBI" id="CHEBI:58437"/>
    </ligand>
</feature>
<sequence length="277" mass="31108">MRPLQEKIIAYEHVLPEIDPQKEIRKSIDFLKDYLKENPFLKSYVLGISGGQDSTLTGKLCQMAIEEMREETGDDSYQFIAVRLPYGVQADASDAADAIAFQKPDQDLIVNIKDPVDAMVKVVEATGQKITDFNKGNIKARQRMVVQYAIAGANNGAVVGTDHAAENFSGFYTKYGDGAADLTPLFRLDKRQGKAMLKELGCPKHLYEKAPTADLEEEKPDLPDEVALGVTYKEVDDYLEGKEVSEKAAEQIEKLWKKSEHKRHLPVTIFDDFYKKN</sequence>
<name>NADE_LACGA</name>
<organism>
    <name type="scientific">Lactobacillus gasseri (strain ATCC 33323 / DSM 20243 / BCRC 14619 / CIP 102991 / JCM 1131 / KCTC 3163 / NCIMB 11718 / NCTC 13722 / AM63)</name>
    <dbReference type="NCBI Taxonomy" id="324831"/>
    <lineage>
        <taxon>Bacteria</taxon>
        <taxon>Bacillati</taxon>
        <taxon>Bacillota</taxon>
        <taxon>Bacilli</taxon>
        <taxon>Lactobacillales</taxon>
        <taxon>Lactobacillaceae</taxon>
        <taxon>Lactobacillus</taxon>
    </lineage>
</organism>
<protein>
    <recommendedName>
        <fullName evidence="1">NH(3)-dependent NAD(+) synthetase</fullName>
        <ecNumber evidence="1">6.3.1.5</ecNumber>
    </recommendedName>
</protein>